<accession>D0ZWR9</accession>
<proteinExistence type="evidence at transcript level"/>
<name>SCTC2_SALT1</name>
<comment type="function">
    <text evidence="1 2">Component of the type III secretion system (T3SS), also called injectisome, which is used to inject bacterial effector proteins into eukaryotic host cells (PubMed:10406797). Forms a ring-shaped multimeric structure with an apparent central pore in the outer membrane (By similarity). Required for secretion of some type III-secreted effectors including the SpvB exotoxin (PubMed:10406797).</text>
</comment>
<comment type="subunit">
    <text evidence="1">The core secretion machinery of the T3SS is composed of approximately 20 different proteins, including cytoplasmic components, a base, an export apparatus and a needle. This subunit is part of the base, which anchors the injectisome in the bacterial cell envelope. Forms a stable homooligomeric complex.</text>
</comment>
<comment type="subcellular location">
    <subcellularLocation>
        <location evidence="1 2">Cell outer membrane</location>
    </subcellularLocation>
</comment>
<comment type="disruption phenotype">
    <text evidence="2">Does not survive in murine macrophages, although it can invade epithelial cells. The SpiC protein is not exported into host macrophage cells.</text>
</comment>
<comment type="similarity">
    <text evidence="1 3">Belongs to the bacterial secretin family. T3SS SctC subfamily.</text>
</comment>
<feature type="signal peptide" evidence="1">
    <location>
        <begin position="1"/>
        <end position="20"/>
    </location>
</feature>
<feature type="chain" id="PRO_0000410497" description="SPI-2 type 3 secretion system secretin" evidence="1">
    <location>
        <begin position="21"/>
        <end position="497"/>
    </location>
</feature>
<evidence type="ECO:0000255" key="1">
    <source>
        <dbReference type="HAMAP-Rule" id="MF_02219"/>
    </source>
</evidence>
<evidence type="ECO:0000269" key="2">
    <source>
    </source>
</evidence>
<evidence type="ECO:0000305" key="3"/>
<dbReference type="EMBL" id="CP001363">
    <property type="protein sequence ID" value="ACY88167.1"/>
    <property type="molecule type" value="Genomic_DNA"/>
</dbReference>
<dbReference type="RefSeq" id="WP_000261284.1">
    <property type="nucleotide sequence ID" value="NZ_CP043402.1"/>
</dbReference>
<dbReference type="SMR" id="D0ZWR9"/>
<dbReference type="KEGG" id="seo:STM14_1689"/>
<dbReference type="PATRIC" id="fig|588858.6.peg.1624"/>
<dbReference type="HOGENOM" id="CLU_022474_4_0_6"/>
<dbReference type="BioCyc" id="SENT588858:STM14_RS07825-MONOMER"/>
<dbReference type="PHI-base" id="PHI:10124"/>
<dbReference type="Proteomes" id="UP000002695">
    <property type="component" value="Chromosome"/>
</dbReference>
<dbReference type="GO" id="GO:0009279">
    <property type="term" value="C:cell outer membrane"/>
    <property type="evidence" value="ECO:0007669"/>
    <property type="project" value="UniProtKB-SubCell"/>
</dbReference>
<dbReference type="GO" id="GO:0015627">
    <property type="term" value="C:type II protein secretion system complex"/>
    <property type="evidence" value="ECO:0007669"/>
    <property type="project" value="TreeGrafter"/>
</dbReference>
<dbReference type="GO" id="GO:0030257">
    <property type="term" value="C:type III protein secretion system complex"/>
    <property type="evidence" value="ECO:0007669"/>
    <property type="project" value="UniProtKB-UniRule"/>
</dbReference>
<dbReference type="GO" id="GO:0030254">
    <property type="term" value="P:protein secretion by the type III secretion system"/>
    <property type="evidence" value="ECO:0007669"/>
    <property type="project" value="UniProtKB-UniRule"/>
</dbReference>
<dbReference type="Gene3D" id="3.30.1370.120">
    <property type="match status" value="2"/>
</dbReference>
<dbReference type="Gene3D" id="3.55.50.30">
    <property type="match status" value="1"/>
</dbReference>
<dbReference type="HAMAP" id="MF_02219">
    <property type="entry name" value="Type_III_secretin"/>
    <property type="match status" value="1"/>
</dbReference>
<dbReference type="InterPro" id="IPR050810">
    <property type="entry name" value="Bact_Secretion_Sys_Channel"/>
</dbReference>
<dbReference type="InterPro" id="IPR005644">
    <property type="entry name" value="NolW-like"/>
</dbReference>
<dbReference type="InterPro" id="IPR038591">
    <property type="entry name" value="NolW-like_sf"/>
</dbReference>
<dbReference type="InterPro" id="IPR004846">
    <property type="entry name" value="T2SS/T3SS_dom"/>
</dbReference>
<dbReference type="InterPro" id="IPR004845">
    <property type="entry name" value="T2SS_GspD_CS"/>
</dbReference>
<dbReference type="InterPro" id="IPR003522">
    <property type="entry name" value="T3SS_OM_pore_YscC"/>
</dbReference>
<dbReference type="NCBIfam" id="NF011873">
    <property type="entry name" value="PRK15346.1"/>
    <property type="match status" value="1"/>
</dbReference>
<dbReference type="NCBIfam" id="TIGR02516">
    <property type="entry name" value="type_III_yscC"/>
    <property type="match status" value="1"/>
</dbReference>
<dbReference type="PANTHER" id="PTHR30332">
    <property type="entry name" value="PROBABLE GENERAL SECRETION PATHWAY PROTEIN D"/>
    <property type="match status" value="1"/>
</dbReference>
<dbReference type="PANTHER" id="PTHR30332:SF4">
    <property type="entry name" value="TYPE 3 SECRETION SYSTEM SECRETIN"/>
    <property type="match status" value="1"/>
</dbReference>
<dbReference type="Pfam" id="PF00263">
    <property type="entry name" value="Secretin"/>
    <property type="match status" value="1"/>
</dbReference>
<dbReference type="Pfam" id="PF03958">
    <property type="entry name" value="Secretin_N"/>
    <property type="match status" value="1"/>
</dbReference>
<dbReference type="PRINTS" id="PR01337">
    <property type="entry name" value="TYPE3OMGPROT"/>
</dbReference>
<dbReference type="PROSITE" id="PS00875">
    <property type="entry name" value="T2SP_D"/>
    <property type="match status" value="1"/>
</dbReference>
<gene>
    <name evidence="1" type="primary">sctC2</name>
    <name type="synonym">spiA</name>
    <name type="synonym">ssaC</name>
    <name type="ordered locus">STM14_1689</name>
</gene>
<reference key="1">
    <citation type="journal article" date="2010" name="J. Bacteriol.">
        <title>Short-term signatures of evolutionary change in the Salmonella enterica serovar typhimurium 14028 genome.</title>
        <authorList>
            <person name="Jarvik T."/>
            <person name="Smillie C."/>
            <person name="Groisman E.A."/>
            <person name="Ochman H."/>
        </authorList>
    </citation>
    <scope>NUCLEOTIDE SEQUENCE [LARGE SCALE GENOMIC DNA]</scope>
    <source>
        <strain>14028s / SGSC 2262</strain>
    </source>
</reference>
<reference key="2">
    <citation type="journal article" date="1999" name="EMBO J.">
        <title>A Salmonella virulence protein that inhibits cellular trafficking.</title>
        <authorList>
            <person name="Uchiya K."/>
            <person name="Barbieri M.A."/>
            <person name="Funato K."/>
            <person name="Shah A.H."/>
            <person name="Stahl P.D."/>
            <person name="Groisman E.A."/>
        </authorList>
    </citation>
    <scope>FUNCTION</scope>
    <scope>SUBCELLULAR LOCATION</scope>
    <scope>INDUCTION</scope>
    <scope>DISRUPTION PHENOTYPE</scope>
    <source>
        <strain>14028s / SGSC 2262</strain>
    </source>
</reference>
<keyword id="KW-0998">Cell outer membrane</keyword>
<keyword id="KW-0472">Membrane</keyword>
<keyword id="KW-0653">Protein transport</keyword>
<keyword id="KW-0732">Signal</keyword>
<keyword id="KW-0811">Translocation</keyword>
<keyword id="KW-0813">Transport</keyword>
<keyword id="KW-0843">Virulence</keyword>
<sequence length="497" mass="54113">MVVNKRLILILLFILNTAKSDELSWKGNDFTLYARQMPLAEVLHLLSENYDTAITISPLITATFSGKIPPGPPVDILNNLAAQYDLLTWFDGSMLYVYPASLLKHQVITFNILSTGRFIHYLRSQNILSSPGCEVKEITGTKAVEVSGVPSCLTRISQLASVLDNALIKRKDSAVSVSIYTLKYATAMDTQYQYRDQSVVVPGVVSVLREMSKTSVPTSSTNNGSPATQALPMFAADPRQNAVIVRDYAANMAGYRKLITELDQRQQMIEISVKIIDVNAGDINQLGIDWGTAVSLGGKKIAFNTGLNDGGASGFSTVISDTSNFMVRLNALEKSSQAYVLSQPSVVTLNNIQAVLDKNITFYTKLQGEKVAKLESITTGSLLRVTPRLLNDNGTQKIMLNLNIQDGQQSDTQSETDPLPEVQNSEIASQATLLAGQSLLLGGFKQGKQIHSQNKIPLLGDIPVVGHLFRNDTTQVHSVIRLFLIKASVVNNGISHG</sequence>
<organism>
    <name type="scientific">Salmonella typhimurium (strain 14028s / SGSC 2262)</name>
    <dbReference type="NCBI Taxonomy" id="588858"/>
    <lineage>
        <taxon>Bacteria</taxon>
        <taxon>Pseudomonadati</taxon>
        <taxon>Pseudomonadota</taxon>
        <taxon>Gammaproteobacteria</taxon>
        <taxon>Enterobacterales</taxon>
        <taxon>Enterobacteriaceae</taxon>
        <taxon>Salmonella</taxon>
    </lineage>
</organism>
<protein>
    <recommendedName>
        <fullName evidence="3">SPI-2 type 3 secretion system secretin</fullName>
        <shortName evidence="3">T3SS-2 secretin</shortName>
    </recommendedName>
    <alternativeName>
        <fullName>Outer membrane protein SpiA</fullName>
    </alternativeName>
    <alternativeName>
        <fullName>Type III secretion system outer membrane protein SpiA</fullName>
    </alternativeName>
</protein>